<reference key="1">
    <citation type="journal article" date="2006" name="Proc. Natl. Acad. Sci. U.S.A.">
        <title>The complete genome sequence of a chronic atrophic gastritis Helicobacter pylori strain: evolution during disease progression.</title>
        <authorList>
            <person name="Oh J.D."/>
            <person name="Kling-Baeckhed H."/>
            <person name="Giannakis M."/>
            <person name="Xu J."/>
            <person name="Fulton R.S."/>
            <person name="Fulton L.A."/>
            <person name="Cordum H.S."/>
            <person name="Wang C."/>
            <person name="Elliott G."/>
            <person name="Edwards J."/>
            <person name="Mardis E.R."/>
            <person name="Engstrand L.G."/>
            <person name="Gordon J.I."/>
        </authorList>
    </citation>
    <scope>NUCLEOTIDE SEQUENCE [LARGE SCALE GENOMIC DNA]</scope>
    <source>
        <strain>HPAG1</strain>
    </source>
</reference>
<proteinExistence type="inferred from homology"/>
<organism>
    <name type="scientific">Helicobacter pylori (strain HPAG1)</name>
    <dbReference type="NCBI Taxonomy" id="357544"/>
    <lineage>
        <taxon>Bacteria</taxon>
        <taxon>Pseudomonadati</taxon>
        <taxon>Campylobacterota</taxon>
        <taxon>Epsilonproteobacteria</taxon>
        <taxon>Campylobacterales</taxon>
        <taxon>Helicobacteraceae</taxon>
        <taxon>Helicobacter</taxon>
    </lineage>
</organism>
<comment type="function">
    <text evidence="1">This protein is located at the 30S-50S ribosomal subunit interface and may play a role in the structure and function of the aminoacyl-tRNA binding site.</text>
</comment>
<comment type="similarity">
    <text evidence="1">Belongs to the bacterial ribosomal protein bL19 family.</text>
</comment>
<protein>
    <recommendedName>
        <fullName evidence="1">Large ribosomal subunit protein bL19</fullName>
    </recommendedName>
    <alternativeName>
        <fullName evidence="2">50S ribosomal protein L19</fullName>
    </alternativeName>
</protein>
<name>RL19_HELPH</name>
<keyword id="KW-0687">Ribonucleoprotein</keyword>
<keyword id="KW-0689">Ribosomal protein</keyword>
<accession>Q1CSB9</accession>
<dbReference type="EMBL" id="CP000241">
    <property type="protein sequence ID" value="ABF85153.1"/>
    <property type="molecule type" value="Genomic_DNA"/>
</dbReference>
<dbReference type="RefSeq" id="WP_000797699.1">
    <property type="nucleotide sequence ID" value="NC_008086.1"/>
</dbReference>
<dbReference type="SMR" id="Q1CSB9"/>
<dbReference type="KEGG" id="hpa:HPAG1_1086"/>
<dbReference type="HOGENOM" id="CLU_103507_2_1_7"/>
<dbReference type="GO" id="GO:0022625">
    <property type="term" value="C:cytosolic large ribosomal subunit"/>
    <property type="evidence" value="ECO:0007669"/>
    <property type="project" value="TreeGrafter"/>
</dbReference>
<dbReference type="GO" id="GO:0003735">
    <property type="term" value="F:structural constituent of ribosome"/>
    <property type="evidence" value="ECO:0007669"/>
    <property type="project" value="InterPro"/>
</dbReference>
<dbReference type="GO" id="GO:0006412">
    <property type="term" value="P:translation"/>
    <property type="evidence" value="ECO:0007669"/>
    <property type="project" value="UniProtKB-UniRule"/>
</dbReference>
<dbReference type="FunFam" id="2.30.30.790:FF:000001">
    <property type="entry name" value="50S ribosomal protein L19"/>
    <property type="match status" value="1"/>
</dbReference>
<dbReference type="Gene3D" id="2.30.30.790">
    <property type="match status" value="1"/>
</dbReference>
<dbReference type="HAMAP" id="MF_00402">
    <property type="entry name" value="Ribosomal_bL19"/>
    <property type="match status" value="1"/>
</dbReference>
<dbReference type="InterPro" id="IPR001857">
    <property type="entry name" value="Ribosomal_bL19"/>
</dbReference>
<dbReference type="InterPro" id="IPR018257">
    <property type="entry name" value="Ribosomal_bL19_CS"/>
</dbReference>
<dbReference type="InterPro" id="IPR038657">
    <property type="entry name" value="Ribosomal_bL19_sf"/>
</dbReference>
<dbReference type="InterPro" id="IPR008991">
    <property type="entry name" value="Translation_prot_SH3-like_sf"/>
</dbReference>
<dbReference type="NCBIfam" id="TIGR01024">
    <property type="entry name" value="rplS_bact"/>
    <property type="match status" value="1"/>
</dbReference>
<dbReference type="PANTHER" id="PTHR15680:SF9">
    <property type="entry name" value="LARGE RIBOSOMAL SUBUNIT PROTEIN BL19M"/>
    <property type="match status" value="1"/>
</dbReference>
<dbReference type="PANTHER" id="PTHR15680">
    <property type="entry name" value="RIBOSOMAL PROTEIN L19"/>
    <property type="match status" value="1"/>
</dbReference>
<dbReference type="Pfam" id="PF01245">
    <property type="entry name" value="Ribosomal_L19"/>
    <property type="match status" value="1"/>
</dbReference>
<dbReference type="PIRSF" id="PIRSF002191">
    <property type="entry name" value="Ribosomal_L19"/>
    <property type="match status" value="1"/>
</dbReference>
<dbReference type="PRINTS" id="PR00061">
    <property type="entry name" value="RIBOSOMALL19"/>
</dbReference>
<dbReference type="SUPFAM" id="SSF50104">
    <property type="entry name" value="Translation proteins SH3-like domain"/>
    <property type="match status" value="1"/>
</dbReference>
<dbReference type="PROSITE" id="PS01015">
    <property type="entry name" value="RIBOSOMAL_L19"/>
    <property type="match status" value="1"/>
</dbReference>
<feature type="chain" id="PRO_0000252512" description="Large ribosomal subunit protein bL19">
    <location>
        <begin position="1"/>
        <end position="118"/>
    </location>
</feature>
<gene>
    <name evidence="1" type="primary">rplS</name>
    <name type="ordered locus">HPAG1_1086</name>
</gene>
<evidence type="ECO:0000255" key="1">
    <source>
        <dbReference type="HAMAP-Rule" id="MF_00402"/>
    </source>
</evidence>
<evidence type="ECO:0000305" key="2"/>
<sequence length="118" mass="13600">MKNRYIQQFEDAQLKDKTMPAFKAGDTLRLGITIKEGEKTRTQYFEGVCIAIRGNGVDKTFCVRKIGANNIGVEKIFPFYSESLASVEVLRVGRVRRAKLYYLRDRRGKAARIKEVRH</sequence>